<protein>
    <recommendedName>
        <fullName>Chaperone protein DnaK</fullName>
    </recommendedName>
    <alternativeName>
        <fullName>HSP70</fullName>
    </alternativeName>
    <alternativeName>
        <fullName>Heat shock 70 kDa protein</fullName>
    </alternativeName>
    <alternativeName>
        <fullName>Heat shock protein 70</fullName>
    </alternativeName>
</protein>
<reference key="1">
    <citation type="journal article" date="1994" name="Curr. Biol.">
        <title>Phylogenetic analysis of 70 kD heat shock protein sequences suggests a chimeric origin for the eukaryotic cell nucleus.</title>
        <authorList>
            <person name="Gupta R.S."/>
            <person name="Singh B."/>
        </authorList>
    </citation>
    <scope>NUCLEOTIDE SEQUENCE [GENOMIC DNA]</scope>
</reference>
<reference key="2">
    <citation type="journal article" date="2000" name="Proc. Natl. Acad. Sci. U.S.A.">
        <title>Genome sequence of Halobacterium species NRC-1.</title>
        <authorList>
            <person name="Ng W.V."/>
            <person name="Kennedy S.P."/>
            <person name="Mahairas G.G."/>
            <person name="Berquist B."/>
            <person name="Pan M."/>
            <person name="Shukla H.D."/>
            <person name="Lasky S.R."/>
            <person name="Baliga N.S."/>
            <person name="Thorsson V."/>
            <person name="Sbrogna J."/>
            <person name="Swartzell S."/>
            <person name="Weir D."/>
            <person name="Hall J."/>
            <person name="Dahl T.A."/>
            <person name="Welti R."/>
            <person name="Goo Y.A."/>
            <person name="Leithauser B."/>
            <person name="Keller K."/>
            <person name="Cruz R."/>
            <person name="Danson M.J."/>
            <person name="Hough D.W."/>
            <person name="Maddocks D.G."/>
            <person name="Jablonski P.E."/>
            <person name="Krebs M.P."/>
            <person name="Angevine C.M."/>
            <person name="Dale H."/>
            <person name="Isenbarger T.A."/>
            <person name="Peck R.F."/>
            <person name="Pohlschroder M."/>
            <person name="Spudich J.L."/>
            <person name="Jung K.-H."/>
            <person name="Alam M."/>
            <person name="Freitas T."/>
            <person name="Hou S."/>
            <person name="Daniels C.J."/>
            <person name="Dennis P.P."/>
            <person name="Omer A.D."/>
            <person name="Ebhardt H."/>
            <person name="Lowe T.M."/>
            <person name="Liang P."/>
            <person name="Riley M."/>
            <person name="Hood L."/>
            <person name="DasSarma S."/>
        </authorList>
    </citation>
    <scope>NUCLEOTIDE SEQUENCE [LARGE SCALE GENOMIC DNA]</scope>
    <source>
        <strain>ATCC 700922 / JCM 11081 / NRC-1</strain>
    </source>
</reference>
<reference key="3">
    <citation type="journal article" date="1997" name="J. Mol. Evol.">
        <title>The sequences of heat shock protein 40 (DnaJ) homologs provide evidence for a close evolutionary relationship between the Deinococcus-thermus group and cyanobacteria.</title>
        <authorList>
            <person name="Bustard K."/>
            <person name="Gupta R.S."/>
        </authorList>
    </citation>
    <scope>NUCLEOTIDE SEQUENCE [GENOMIC DNA] OF 561-629</scope>
    <source>
        <strain>ATCC 33170 / DSM 669 / NCCB 81095 / NRC 34001</strain>
    </source>
</reference>
<keyword id="KW-0067">ATP-binding</keyword>
<keyword id="KW-0143">Chaperone</keyword>
<keyword id="KW-0547">Nucleotide-binding</keyword>
<keyword id="KW-1185">Reference proteome</keyword>
<proteinExistence type="inferred from homology"/>
<accession>Q9HRY2</accession>
<accession>P42372</accession>
<dbReference type="EMBL" id="L35530">
    <property type="protein sequence ID" value="AAC41461.1"/>
    <property type="molecule type" value="Genomic_DNA"/>
</dbReference>
<dbReference type="EMBL" id="AE004437">
    <property type="protein sequence ID" value="AAG19026.1"/>
    <property type="molecule type" value="Genomic_DNA"/>
</dbReference>
<dbReference type="EMBL" id="U93357">
    <property type="protein sequence ID" value="AAB96890.1"/>
    <property type="molecule type" value="Genomic_DNA"/>
</dbReference>
<dbReference type="PIR" id="F84207">
    <property type="entry name" value="F84207"/>
</dbReference>
<dbReference type="PIR" id="T44956">
    <property type="entry name" value="T44956"/>
</dbReference>
<dbReference type="PIR" id="T48891">
    <property type="entry name" value="T48891"/>
</dbReference>
<dbReference type="RefSeq" id="WP_010902322.1">
    <property type="nucleotide sequence ID" value="NC_002607.1"/>
</dbReference>
<dbReference type="SMR" id="Q9HRY2"/>
<dbReference type="STRING" id="64091.VNG_0491G"/>
<dbReference type="PaxDb" id="64091-VNG_0491G"/>
<dbReference type="GeneID" id="68693398"/>
<dbReference type="KEGG" id="hal:VNG_0491G"/>
<dbReference type="PATRIC" id="fig|64091.14.peg.373"/>
<dbReference type="HOGENOM" id="CLU_005965_2_1_2"/>
<dbReference type="InParanoid" id="Q9HRY2"/>
<dbReference type="OrthoDB" id="9944at2157"/>
<dbReference type="PhylomeDB" id="Q9HRY2"/>
<dbReference type="Proteomes" id="UP000000554">
    <property type="component" value="Chromosome"/>
</dbReference>
<dbReference type="GO" id="GO:0005524">
    <property type="term" value="F:ATP binding"/>
    <property type="evidence" value="ECO:0007669"/>
    <property type="project" value="UniProtKB-UniRule"/>
</dbReference>
<dbReference type="GO" id="GO:0016887">
    <property type="term" value="F:ATP hydrolysis activity"/>
    <property type="evidence" value="ECO:0000318"/>
    <property type="project" value="GO_Central"/>
</dbReference>
<dbReference type="GO" id="GO:0140662">
    <property type="term" value="F:ATP-dependent protein folding chaperone"/>
    <property type="evidence" value="ECO:0007669"/>
    <property type="project" value="InterPro"/>
</dbReference>
<dbReference type="GO" id="GO:0031072">
    <property type="term" value="F:heat shock protein binding"/>
    <property type="evidence" value="ECO:0000318"/>
    <property type="project" value="GO_Central"/>
</dbReference>
<dbReference type="GO" id="GO:0044183">
    <property type="term" value="F:protein folding chaperone"/>
    <property type="evidence" value="ECO:0000318"/>
    <property type="project" value="GO_Central"/>
</dbReference>
<dbReference type="GO" id="GO:0051082">
    <property type="term" value="F:unfolded protein binding"/>
    <property type="evidence" value="ECO:0007669"/>
    <property type="project" value="InterPro"/>
</dbReference>
<dbReference type="GO" id="GO:0051085">
    <property type="term" value="P:chaperone cofactor-dependent protein refolding"/>
    <property type="evidence" value="ECO:0000318"/>
    <property type="project" value="GO_Central"/>
</dbReference>
<dbReference type="GO" id="GO:0042026">
    <property type="term" value="P:protein refolding"/>
    <property type="evidence" value="ECO:0000318"/>
    <property type="project" value="GO_Central"/>
</dbReference>
<dbReference type="CDD" id="cd10234">
    <property type="entry name" value="ASKHA_NBD_HSP70_DnaK-like"/>
    <property type="match status" value="1"/>
</dbReference>
<dbReference type="FunFam" id="2.60.34.10:FF:000014">
    <property type="entry name" value="Chaperone protein DnaK HSP70"/>
    <property type="match status" value="1"/>
</dbReference>
<dbReference type="FunFam" id="3.30.420.40:FF:000071">
    <property type="entry name" value="Molecular chaperone DnaK"/>
    <property type="match status" value="1"/>
</dbReference>
<dbReference type="FunFam" id="3.90.640.10:FF:000003">
    <property type="entry name" value="Molecular chaperone DnaK"/>
    <property type="match status" value="1"/>
</dbReference>
<dbReference type="Gene3D" id="1.20.1270.10">
    <property type="match status" value="1"/>
</dbReference>
<dbReference type="Gene3D" id="3.30.420.40">
    <property type="match status" value="2"/>
</dbReference>
<dbReference type="Gene3D" id="3.90.640.10">
    <property type="entry name" value="Actin, Chain A, domain 4"/>
    <property type="match status" value="1"/>
</dbReference>
<dbReference type="Gene3D" id="2.60.34.10">
    <property type="entry name" value="Substrate Binding Domain Of DNAk, Chain A, domain 1"/>
    <property type="match status" value="1"/>
</dbReference>
<dbReference type="HAMAP" id="MF_00332">
    <property type="entry name" value="DnaK"/>
    <property type="match status" value="1"/>
</dbReference>
<dbReference type="InterPro" id="IPR043129">
    <property type="entry name" value="ATPase_NBD"/>
</dbReference>
<dbReference type="InterPro" id="IPR012725">
    <property type="entry name" value="Chaperone_DnaK"/>
</dbReference>
<dbReference type="InterPro" id="IPR018181">
    <property type="entry name" value="Heat_shock_70_CS"/>
</dbReference>
<dbReference type="InterPro" id="IPR029048">
    <property type="entry name" value="HSP70_C_sf"/>
</dbReference>
<dbReference type="InterPro" id="IPR029047">
    <property type="entry name" value="HSP70_peptide-bd_sf"/>
</dbReference>
<dbReference type="InterPro" id="IPR013126">
    <property type="entry name" value="Hsp_70_fam"/>
</dbReference>
<dbReference type="NCBIfam" id="NF001413">
    <property type="entry name" value="PRK00290.1"/>
    <property type="match status" value="1"/>
</dbReference>
<dbReference type="NCBIfam" id="TIGR02350">
    <property type="entry name" value="prok_dnaK"/>
    <property type="match status" value="1"/>
</dbReference>
<dbReference type="PANTHER" id="PTHR19375">
    <property type="entry name" value="HEAT SHOCK PROTEIN 70KDA"/>
    <property type="match status" value="1"/>
</dbReference>
<dbReference type="Pfam" id="PF00012">
    <property type="entry name" value="HSP70"/>
    <property type="match status" value="1"/>
</dbReference>
<dbReference type="PRINTS" id="PR00301">
    <property type="entry name" value="HEATSHOCK70"/>
</dbReference>
<dbReference type="SUPFAM" id="SSF53067">
    <property type="entry name" value="Actin-like ATPase domain"/>
    <property type="match status" value="2"/>
</dbReference>
<dbReference type="SUPFAM" id="SSF100920">
    <property type="entry name" value="Heat shock protein 70kD (HSP70), peptide-binding domain"/>
    <property type="match status" value="1"/>
</dbReference>
<dbReference type="PROSITE" id="PS00297">
    <property type="entry name" value="HSP70_1"/>
    <property type="match status" value="1"/>
</dbReference>
<dbReference type="PROSITE" id="PS00329">
    <property type="entry name" value="HSP70_2"/>
    <property type="match status" value="1"/>
</dbReference>
<dbReference type="PROSITE" id="PS01036">
    <property type="entry name" value="HSP70_3"/>
    <property type="match status" value="1"/>
</dbReference>
<sequence length="629" mass="67397">MASEKILGVDLGTTNSAFAVMEGSDPEIITNEEGDRTTPSIVAHDDGELLVGKPAKNQAVQNPDQTIASIKRHMGEEDYTVALGDDEYTPEEISARILQKIKRDAEEYLGQDVEKAVITVPAYFNDRQRQATKDAGEIAGFDVERIVNEPTAASMAYGLDEDRDQTVLVYDLGGGTFDVSILDLGGGVYEVAATNGDNDLGGDDWDHAIIDHLADNFENEHGIDLREDRQALQRLTEAAEEAKIELSSRKETTVNLPFVTATDSGPVHLEQDITRATFESITEDLIERTVGPTEQALEDAGLSKSDIDDVILVGGSTRMPQVQAQVEDLVGQEPKKNVNPDEAVALGAAVQGGVLSGEVDDIVLVDVTPLSLGIEVKGGLFERLIEKNTAIPTTASKVFTTAADNQTSVQIRVFQGEREIASENELLGDFHLTGIPPAPAGTPQIEVTFEIDADGIVNVEAEDQGSGNAESITIEGGAGLSDEQIDEMQEDAEAHAEEDEQRRRRIEARNEAETAIQRAESLLEENEELVDEDLEADVNDAIDDVQAVLDEDEPEIDALETATEELSDTLQEIGKQAYQQQQDAQAGAAGGAGGMGGMGGMADGPGGAADADGDDEEYVDADFEDVDEE</sequence>
<organism>
    <name type="scientific">Halobacterium salinarum (strain ATCC 700922 / JCM 11081 / NRC-1)</name>
    <name type="common">Halobacterium halobium</name>
    <dbReference type="NCBI Taxonomy" id="64091"/>
    <lineage>
        <taxon>Archaea</taxon>
        <taxon>Methanobacteriati</taxon>
        <taxon>Methanobacteriota</taxon>
        <taxon>Stenosarchaea group</taxon>
        <taxon>Halobacteria</taxon>
        <taxon>Halobacteriales</taxon>
        <taxon>Halobacteriaceae</taxon>
        <taxon>Halobacterium</taxon>
        <taxon>Halobacterium salinarum NRC-34001</taxon>
    </lineage>
</organism>
<comment type="function">
    <text evidence="1">Acts as a chaperone.</text>
</comment>
<comment type="similarity">
    <text evidence="3">Belongs to the heat shock protein 70 family.</text>
</comment>
<gene>
    <name type="primary">dnaK</name>
    <name type="ordered locus">VNG_0491G</name>
</gene>
<name>DNAK_HALSA</name>
<evidence type="ECO:0000250" key="1"/>
<evidence type="ECO:0000256" key="2">
    <source>
        <dbReference type="SAM" id="MobiDB-lite"/>
    </source>
</evidence>
<evidence type="ECO:0000305" key="3"/>
<feature type="chain" id="PRO_0000078596" description="Chaperone protein DnaK">
    <location>
        <begin position="1"/>
        <end position="629"/>
    </location>
</feature>
<feature type="region of interest" description="Disordered" evidence="2">
    <location>
        <begin position="576"/>
        <end position="629"/>
    </location>
</feature>
<feature type="compositionally biased region" description="Low complexity" evidence="2">
    <location>
        <begin position="576"/>
        <end position="587"/>
    </location>
</feature>
<feature type="compositionally biased region" description="Gly residues" evidence="2">
    <location>
        <begin position="588"/>
        <end position="607"/>
    </location>
</feature>
<feature type="compositionally biased region" description="Acidic residues" evidence="2">
    <location>
        <begin position="611"/>
        <end position="629"/>
    </location>
</feature>
<feature type="sequence conflict" description="In Ref. 1; AAC41461." evidence="3" ref="1">
    <original>R</original>
    <variation>L</variation>
    <location>
        <position position="36"/>
    </location>
</feature>
<feature type="sequence conflict" description="In Ref. 1; AAC41461." evidence="3" ref="1">
    <original>D</original>
    <variation>G</variation>
    <location>
        <position position="85"/>
    </location>
</feature>
<feature type="sequence conflict" description="In Ref. 1; AAC41461." evidence="3" ref="1">
    <original>E</original>
    <variation>D</variation>
    <location>
        <position position="417"/>
    </location>
</feature>
<feature type="sequence conflict" description="In Ref. 1; AAC41461." evidence="3" ref="1">
    <original>A</original>
    <variation>R</variation>
    <location>
        <position position="421"/>
    </location>
</feature>
<feature type="sequence conflict" description="In Ref. 1; AAC41461." evidence="3" ref="1">
    <original>E</original>
    <variation>K</variation>
    <location>
        <position position="425"/>
    </location>
</feature>
<feature type="sequence conflict" description="In Ref. 1; AAC41461." evidence="3" ref="1">
    <original>H</original>
    <variation>I</variation>
    <location>
        <position position="431"/>
    </location>
</feature>
<feature type="sequence conflict" description="In Ref. 1; AAC41461." evidence="3" ref="1">
    <original>P</original>
    <variation>D</variation>
    <location>
        <position position="443"/>
    </location>
</feature>
<feature type="sequence conflict" description="In Ref. 1; AAC41461." evidence="3" ref="1">
    <original>G</original>
    <variation>A</variation>
    <location>
        <position position="455"/>
    </location>
</feature>
<feature type="sequence conflict" description="In Ref. 1; AAC41461." evidence="3" ref="1">
    <original>NA</original>
    <variation>QR</variation>
    <location>
        <begin position="468"/>
        <end position="469"/>
    </location>
</feature>
<feature type="sequence conflict" description="In Ref. 1; AAC41461." evidence="3" ref="1">
    <original>EQ</original>
    <variation>DE</variation>
    <location>
        <begin position="483"/>
        <end position="484"/>
    </location>
</feature>
<feature type="sequence conflict" description="In Ref. 1; AAC41461." evidence="3" ref="1">
    <original>A</original>
    <variation>G</variation>
    <location>
        <position position="515"/>
    </location>
</feature>
<feature type="sequence conflict" description="In Ref. 1 and 3." evidence="3" ref="1 3">
    <original>AQAGAAGGAGGMGGMGGMADGPGGAADADG</original>
    <variation>MPRPARPAALAAWVAWAAWPTARRGGRRRR</variation>
    <location>
        <begin position="584"/>
        <end position="613"/>
    </location>
</feature>